<keyword id="KW-0325">Glycoprotein</keyword>
<keyword id="KW-0646">Protease inhibitor</keyword>
<keyword id="KW-1185">Reference proteome</keyword>
<keyword id="KW-0964">Secreted</keyword>
<keyword id="KW-0722">Serine protease inhibitor</keyword>
<keyword id="KW-0732">Signal</keyword>
<sequence>MRFFPILCLVLFISHGVASRRHSHSKKKKAKESSVGAVGPPSSKDFAFRLYRALVSESPGQNVFFSPLSVSMSLGMLSLGAGLKTKTQILDGLGLSLQQGQEDKLHKGFQQLLQRFRQPSDGLQLSLGSALFKDPAVHIRDDFLSAMKTLYMSDTFSTNFGNPEIAKKQINNYVAKQTKGKIVDFIKDLDSTHVMIVVNYIFFKAKWQTAFSETNTHKMDFHVTPKRTTQVPMMNREDGYSYYLDQNISCTVVGIPYQGNAIALFILPSEGKMKQVEDGLDERTLRNWLKMFTKRRLDLYLPKFSIEATYKLENVLPKLGIQDVFTTHADLSGITDHTNIKLSEMVHKSMMEVEESGTTAAAITGAIFTFRSARPSSLKIEFTRPFLLTLMEDSHILFVGKVTRP</sequence>
<feature type="signal peptide" evidence="2">
    <location>
        <begin position="1"/>
        <end position="19"/>
    </location>
</feature>
<feature type="propeptide" id="PRO_0000414092" description="Removed in mature form" evidence="1">
    <location>
        <begin position="20"/>
        <end position="24"/>
    </location>
</feature>
<feature type="chain" id="PRO_0000032428" description="Plasma serine protease inhibitor">
    <location>
        <begin position="25"/>
        <end position="405"/>
    </location>
</feature>
<feature type="site" description="Reactive bond">
    <location>
        <begin position="372"/>
        <end position="373"/>
    </location>
</feature>
<feature type="glycosylation site" description="N-linked (GlcNAc...) asparagine" evidence="2">
    <location>
        <position position="247"/>
    </location>
</feature>
<feature type="sequence conflict" description="In Ref. 1; AAC53063 and 4; AAH90981." evidence="5" ref="1 4">
    <original>V</original>
    <variation>A</variation>
    <location>
        <position position="55"/>
    </location>
</feature>
<feature type="sequence conflict" description="In Ref. 1; AAC53063 and 4; AAH90981." evidence="5" ref="1 4">
    <original>F</original>
    <variation>L</variation>
    <location>
        <position position="185"/>
    </location>
</feature>
<feature type="sequence conflict" description="In Ref. 1; AAC53063 and 4; AAH90981." evidence="5" ref="1 4">
    <original>RTTQ</original>
    <variation>KTIR</variation>
    <location>
        <begin position="227"/>
        <end position="230"/>
    </location>
</feature>
<feature type="sequence conflict" description="In Ref. 1; AAC53063 and 4; AAH90981." evidence="5" ref="1 4">
    <original>G</original>
    <variation>E</variation>
    <location>
        <position position="239"/>
    </location>
</feature>
<reference key="1">
    <citation type="journal article" date="1997" name="Gene">
        <title>Molecular cloning and sequence analysis of the mouse protein C inhibitor gene.</title>
        <authorList>
            <person name="Zechmeister-Machhart M."/>
            <person name="Hufnagl P."/>
            <person name="Uhrin P."/>
            <person name="Korschineck I."/>
            <person name="Binder B.R."/>
            <person name="Geiger M."/>
        </authorList>
    </citation>
    <scope>NUCLEOTIDE SEQUENCE [GENOMIC DNA]</scope>
    <source>
        <strain>BALB/cJ</strain>
        <tissue>Liver</tissue>
        <tissue>Testis</tissue>
    </source>
</reference>
<reference key="2">
    <citation type="journal article" date="2005" name="Science">
        <title>The transcriptional landscape of the mammalian genome.</title>
        <authorList>
            <person name="Carninci P."/>
            <person name="Kasukawa T."/>
            <person name="Katayama S."/>
            <person name="Gough J."/>
            <person name="Frith M.C."/>
            <person name="Maeda N."/>
            <person name="Oyama R."/>
            <person name="Ravasi T."/>
            <person name="Lenhard B."/>
            <person name="Wells C."/>
            <person name="Kodzius R."/>
            <person name="Shimokawa K."/>
            <person name="Bajic V.B."/>
            <person name="Brenner S.E."/>
            <person name="Batalov S."/>
            <person name="Forrest A.R."/>
            <person name="Zavolan M."/>
            <person name="Davis M.J."/>
            <person name="Wilming L.G."/>
            <person name="Aidinis V."/>
            <person name="Allen J.E."/>
            <person name="Ambesi-Impiombato A."/>
            <person name="Apweiler R."/>
            <person name="Aturaliya R.N."/>
            <person name="Bailey T.L."/>
            <person name="Bansal M."/>
            <person name="Baxter L."/>
            <person name="Beisel K.W."/>
            <person name="Bersano T."/>
            <person name="Bono H."/>
            <person name="Chalk A.M."/>
            <person name="Chiu K.P."/>
            <person name="Choudhary V."/>
            <person name="Christoffels A."/>
            <person name="Clutterbuck D.R."/>
            <person name="Crowe M.L."/>
            <person name="Dalla E."/>
            <person name="Dalrymple B.P."/>
            <person name="de Bono B."/>
            <person name="Della Gatta G."/>
            <person name="di Bernardo D."/>
            <person name="Down T."/>
            <person name="Engstrom P."/>
            <person name="Fagiolini M."/>
            <person name="Faulkner G."/>
            <person name="Fletcher C.F."/>
            <person name="Fukushima T."/>
            <person name="Furuno M."/>
            <person name="Futaki S."/>
            <person name="Gariboldi M."/>
            <person name="Georgii-Hemming P."/>
            <person name="Gingeras T.R."/>
            <person name="Gojobori T."/>
            <person name="Green R.E."/>
            <person name="Gustincich S."/>
            <person name="Harbers M."/>
            <person name="Hayashi Y."/>
            <person name="Hensch T.K."/>
            <person name="Hirokawa N."/>
            <person name="Hill D."/>
            <person name="Huminiecki L."/>
            <person name="Iacono M."/>
            <person name="Ikeo K."/>
            <person name="Iwama A."/>
            <person name="Ishikawa T."/>
            <person name="Jakt M."/>
            <person name="Kanapin A."/>
            <person name="Katoh M."/>
            <person name="Kawasawa Y."/>
            <person name="Kelso J."/>
            <person name="Kitamura H."/>
            <person name="Kitano H."/>
            <person name="Kollias G."/>
            <person name="Krishnan S.P."/>
            <person name="Kruger A."/>
            <person name="Kummerfeld S.K."/>
            <person name="Kurochkin I.V."/>
            <person name="Lareau L.F."/>
            <person name="Lazarevic D."/>
            <person name="Lipovich L."/>
            <person name="Liu J."/>
            <person name="Liuni S."/>
            <person name="McWilliam S."/>
            <person name="Madan Babu M."/>
            <person name="Madera M."/>
            <person name="Marchionni L."/>
            <person name="Matsuda H."/>
            <person name="Matsuzawa S."/>
            <person name="Miki H."/>
            <person name="Mignone F."/>
            <person name="Miyake S."/>
            <person name="Morris K."/>
            <person name="Mottagui-Tabar S."/>
            <person name="Mulder N."/>
            <person name="Nakano N."/>
            <person name="Nakauchi H."/>
            <person name="Ng P."/>
            <person name="Nilsson R."/>
            <person name="Nishiguchi S."/>
            <person name="Nishikawa S."/>
            <person name="Nori F."/>
            <person name="Ohara O."/>
            <person name="Okazaki Y."/>
            <person name="Orlando V."/>
            <person name="Pang K.C."/>
            <person name="Pavan W.J."/>
            <person name="Pavesi G."/>
            <person name="Pesole G."/>
            <person name="Petrovsky N."/>
            <person name="Piazza S."/>
            <person name="Reed J."/>
            <person name="Reid J.F."/>
            <person name="Ring B.Z."/>
            <person name="Ringwald M."/>
            <person name="Rost B."/>
            <person name="Ruan Y."/>
            <person name="Salzberg S.L."/>
            <person name="Sandelin A."/>
            <person name="Schneider C."/>
            <person name="Schoenbach C."/>
            <person name="Sekiguchi K."/>
            <person name="Semple C.A."/>
            <person name="Seno S."/>
            <person name="Sessa L."/>
            <person name="Sheng Y."/>
            <person name="Shibata Y."/>
            <person name="Shimada H."/>
            <person name="Shimada K."/>
            <person name="Silva D."/>
            <person name="Sinclair B."/>
            <person name="Sperling S."/>
            <person name="Stupka E."/>
            <person name="Sugiura K."/>
            <person name="Sultana R."/>
            <person name="Takenaka Y."/>
            <person name="Taki K."/>
            <person name="Tammoja K."/>
            <person name="Tan S.L."/>
            <person name="Tang S."/>
            <person name="Taylor M.S."/>
            <person name="Tegner J."/>
            <person name="Teichmann S.A."/>
            <person name="Ueda H.R."/>
            <person name="van Nimwegen E."/>
            <person name="Verardo R."/>
            <person name="Wei C.L."/>
            <person name="Yagi K."/>
            <person name="Yamanishi H."/>
            <person name="Zabarovsky E."/>
            <person name="Zhu S."/>
            <person name="Zimmer A."/>
            <person name="Hide W."/>
            <person name="Bult C."/>
            <person name="Grimmond S.M."/>
            <person name="Teasdale R.D."/>
            <person name="Liu E.T."/>
            <person name="Brusic V."/>
            <person name="Quackenbush J."/>
            <person name="Wahlestedt C."/>
            <person name="Mattick J.S."/>
            <person name="Hume D.A."/>
            <person name="Kai C."/>
            <person name="Sasaki D."/>
            <person name="Tomaru Y."/>
            <person name="Fukuda S."/>
            <person name="Kanamori-Katayama M."/>
            <person name="Suzuki M."/>
            <person name="Aoki J."/>
            <person name="Arakawa T."/>
            <person name="Iida J."/>
            <person name="Imamura K."/>
            <person name="Itoh M."/>
            <person name="Kato T."/>
            <person name="Kawaji H."/>
            <person name="Kawagashira N."/>
            <person name="Kawashima T."/>
            <person name="Kojima M."/>
            <person name="Kondo S."/>
            <person name="Konno H."/>
            <person name="Nakano K."/>
            <person name="Ninomiya N."/>
            <person name="Nishio T."/>
            <person name="Okada M."/>
            <person name="Plessy C."/>
            <person name="Shibata K."/>
            <person name="Shiraki T."/>
            <person name="Suzuki S."/>
            <person name="Tagami M."/>
            <person name="Waki K."/>
            <person name="Watahiki A."/>
            <person name="Okamura-Oho Y."/>
            <person name="Suzuki H."/>
            <person name="Kawai J."/>
            <person name="Hayashizaki Y."/>
        </authorList>
    </citation>
    <scope>NUCLEOTIDE SEQUENCE [LARGE SCALE MRNA]</scope>
    <source>
        <strain>C57BL/6J</strain>
        <tissue>Ovary</tissue>
    </source>
</reference>
<reference key="3">
    <citation type="submission" date="2005-09" db="EMBL/GenBank/DDBJ databases">
        <authorList>
            <person name="Mural R.J."/>
            <person name="Adams M.D."/>
            <person name="Myers E.W."/>
            <person name="Smith H.O."/>
            <person name="Venter J.C."/>
        </authorList>
    </citation>
    <scope>NUCLEOTIDE SEQUENCE [LARGE SCALE GENOMIC DNA]</scope>
</reference>
<reference key="4">
    <citation type="journal article" date="2004" name="Genome Res.">
        <title>The status, quality, and expansion of the NIH full-length cDNA project: the Mammalian Gene Collection (MGC).</title>
        <authorList>
            <consortium name="The MGC Project Team"/>
        </authorList>
    </citation>
    <scope>NUCLEOTIDE SEQUENCE [LARGE SCALE MRNA]</scope>
    <source>
        <tissue>Testis</tissue>
    </source>
</reference>
<reference key="5">
    <citation type="journal article" date="2000" name="J. Clin. Invest.">
        <title>Disruption of the protein C inhibitor gene results in impaired spermatogenesis and male infertility.</title>
        <authorList>
            <person name="Uhrin P."/>
            <person name="Dewerchin M."/>
            <person name="Hilpert M."/>
            <person name="Chrenek P."/>
            <person name="Schofer C."/>
            <person name="Zechmeister-Machhart M."/>
            <person name="Kronke G."/>
            <person name="Vales A."/>
            <person name="Carmeliet P."/>
            <person name="Binder B.R."/>
            <person name="Geiger M."/>
        </authorList>
    </citation>
    <scope>DISRUPTION PHENOTYPE</scope>
</reference>
<reference key="6">
    <citation type="journal article" date="2004" name="J. Thromb. Haemost.">
        <title>Characterization of a novel human protein C inhibitor (PCI) gene transgenic mouse useful for studying the role of PCI in physiological and pathological conditions.</title>
        <authorList>
            <person name="Hayashi T."/>
            <person name="Nishioka J."/>
            <person name="Kamada H."/>
            <person name="Asanuma K."/>
            <person name="Kondo H."/>
            <person name="Gabazza E.C."/>
            <person name="Ido M."/>
            <person name="Suzuki K."/>
        </authorList>
    </citation>
    <scope>TISSUE SPECIFICITY</scope>
</reference>
<proteinExistence type="evidence at protein level"/>
<protein>
    <recommendedName>
        <fullName>Plasma serine protease inhibitor</fullName>
    </recommendedName>
    <alternativeName>
        <fullName>Plasminogen activator inhibitor 3</fullName>
        <shortName>PAI-3</shortName>
        <shortName>PAI3</shortName>
    </alternativeName>
    <alternativeName>
        <fullName>Protein C inhibitor</fullName>
        <shortName>PCI</shortName>
    </alternativeName>
    <alternativeName>
        <fullName>Serpin A5</fullName>
    </alternativeName>
</protein>
<organism>
    <name type="scientific">Mus musculus</name>
    <name type="common">Mouse</name>
    <dbReference type="NCBI Taxonomy" id="10090"/>
    <lineage>
        <taxon>Eukaryota</taxon>
        <taxon>Metazoa</taxon>
        <taxon>Chordata</taxon>
        <taxon>Craniata</taxon>
        <taxon>Vertebrata</taxon>
        <taxon>Euteleostomi</taxon>
        <taxon>Mammalia</taxon>
        <taxon>Eutheria</taxon>
        <taxon>Euarchontoglires</taxon>
        <taxon>Glires</taxon>
        <taxon>Rodentia</taxon>
        <taxon>Myomorpha</taxon>
        <taxon>Muroidea</taxon>
        <taxon>Muridae</taxon>
        <taxon>Murinae</taxon>
        <taxon>Mus</taxon>
        <taxon>Mus</taxon>
    </lineage>
</organism>
<evidence type="ECO:0000250" key="1"/>
<evidence type="ECO:0000255" key="2"/>
<evidence type="ECO:0000269" key="3">
    <source>
    </source>
</evidence>
<evidence type="ECO:0000269" key="4">
    <source>
    </source>
</evidence>
<evidence type="ECO:0000305" key="5"/>
<gene>
    <name type="primary">Serpina5</name>
    <name type="synonym">Pci</name>
</gene>
<dbReference type="EMBL" id="U67878">
    <property type="protein sequence ID" value="AAC53063.1"/>
    <property type="molecule type" value="Genomic_DNA"/>
</dbReference>
<dbReference type="EMBL" id="AK087714">
    <property type="protein sequence ID" value="BAC39979.1"/>
    <property type="molecule type" value="mRNA"/>
</dbReference>
<dbReference type="EMBL" id="CH466549">
    <property type="protein sequence ID" value="EDL18804.1"/>
    <property type="molecule type" value="Genomic_DNA"/>
</dbReference>
<dbReference type="EMBL" id="BC090981">
    <property type="protein sequence ID" value="AAH90981.1"/>
    <property type="molecule type" value="mRNA"/>
</dbReference>
<dbReference type="CCDS" id="CCDS26146.1"/>
<dbReference type="RefSeq" id="NP_766541.2">
    <property type="nucleotide sequence ID" value="NM_172953.3"/>
</dbReference>
<dbReference type="RefSeq" id="XP_006515979.1">
    <property type="nucleotide sequence ID" value="XM_006515916.2"/>
</dbReference>
<dbReference type="SMR" id="P70458"/>
<dbReference type="BioGRID" id="234523">
    <property type="interactions" value="1"/>
</dbReference>
<dbReference type="FunCoup" id="P70458">
    <property type="interactions" value="62"/>
</dbReference>
<dbReference type="IntAct" id="P70458">
    <property type="interactions" value="1"/>
</dbReference>
<dbReference type="STRING" id="10090.ENSMUSP00000021495"/>
<dbReference type="MEROPS" id="I04.004"/>
<dbReference type="GlyCosmos" id="P70458">
    <property type="glycosylation" value="1 site, No reported glycans"/>
</dbReference>
<dbReference type="GlyGen" id="P70458">
    <property type="glycosylation" value="1 site"/>
</dbReference>
<dbReference type="iPTMnet" id="P70458"/>
<dbReference type="PhosphoSitePlus" id="P70458"/>
<dbReference type="PaxDb" id="10090-ENSMUSP00000021495"/>
<dbReference type="ProteomicsDB" id="268985"/>
<dbReference type="Antibodypedia" id="27096">
    <property type="antibodies" value="558 antibodies from 34 providers"/>
</dbReference>
<dbReference type="DNASU" id="268591"/>
<dbReference type="Ensembl" id="ENSMUST00000021495.4">
    <property type="protein sequence ID" value="ENSMUSP00000021495.4"/>
    <property type="gene ID" value="ENSMUSG00000041550.5"/>
</dbReference>
<dbReference type="GeneID" id="268591"/>
<dbReference type="KEGG" id="mmu:268591"/>
<dbReference type="UCSC" id="uc007ows.1">
    <property type="organism name" value="mouse"/>
</dbReference>
<dbReference type="AGR" id="MGI:107817"/>
<dbReference type="CTD" id="5104"/>
<dbReference type="MGI" id="MGI:107817">
    <property type="gene designation" value="Serpina5"/>
</dbReference>
<dbReference type="VEuPathDB" id="HostDB:ENSMUSG00000041550"/>
<dbReference type="eggNOG" id="KOG2392">
    <property type="taxonomic scope" value="Eukaryota"/>
</dbReference>
<dbReference type="GeneTree" id="ENSGT00940000162217"/>
<dbReference type="HOGENOM" id="CLU_023330_2_1_1"/>
<dbReference type="InParanoid" id="P70458"/>
<dbReference type="OMA" id="QVPMMNR"/>
<dbReference type="OrthoDB" id="671595at2759"/>
<dbReference type="PhylomeDB" id="P70458"/>
<dbReference type="TreeFam" id="TF343201"/>
<dbReference type="Reactome" id="R-MMU-140837">
    <property type="pathway name" value="Intrinsic Pathway of Fibrin Clot Formation"/>
</dbReference>
<dbReference type="Reactome" id="R-MMU-140875">
    <property type="pathway name" value="Common Pathway of Fibrin Clot Formation"/>
</dbReference>
<dbReference type="BioGRID-ORCS" id="268591">
    <property type="hits" value="1 hit in 80 CRISPR screens"/>
</dbReference>
<dbReference type="PRO" id="PR:P70458"/>
<dbReference type="Proteomes" id="UP000000589">
    <property type="component" value="Chromosome 12"/>
</dbReference>
<dbReference type="RNAct" id="P70458">
    <property type="molecule type" value="protein"/>
</dbReference>
<dbReference type="Bgee" id="ENSMUSG00000041550">
    <property type="expression patterns" value="Expressed in spermatocyte and 41 other cell types or tissues"/>
</dbReference>
<dbReference type="GO" id="GO:0002080">
    <property type="term" value="C:acrosomal membrane"/>
    <property type="evidence" value="ECO:0000250"/>
    <property type="project" value="UniProtKB"/>
</dbReference>
<dbReference type="GO" id="GO:0009897">
    <property type="term" value="C:external side of plasma membrane"/>
    <property type="evidence" value="ECO:0007669"/>
    <property type="project" value="Ensembl"/>
</dbReference>
<dbReference type="GO" id="GO:0070062">
    <property type="term" value="C:extracellular exosome"/>
    <property type="evidence" value="ECO:0007669"/>
    <property type="project" value="Ensembl"/>
</dbReference>
<dbReference type="GO" id="GO:0005615">
    <property type="term" value="C:extracellular space"/>
    <property type="evidence" value="ECO:0000250"/>
    <property type="project" value="UniProtKB"/>
</dbReference>
<dbReference type="GO" id="GO:0031091">
    <property type="term" value="C:platelet alpha granule"/>
    <property type="evidence" value="ECO:0000250"/>
    <property type="project" value="UniProtKB"/>
</dbReference>
<dbReference type="GO" id="GO:0031094">
    <property type="term" value="C:platelet dense tubular network"/>
    <property type="evidence" value="ECO:0000250"/>
    <property type="project" value="UniProtKB"/>
</dbReference>
<dbReference type="GO" id="GO:0097181">
    <property type="term" value="C:protein C inhibitor-coagulation factor V complex"/>
    <property type="evidence" value="ECO:0000250"/>
    <property type="project" value="UniProtKB"/>
</dbReference>
<dbReference type="GO" id="GO:0097182">
    <property type="term" value="C:protein C inhibitor-coagulation factor Xa complex"/>
    <property type="evidence" value="ECO:0000250"/>
    <property type="project" value="UniProtKB"/>
</dbReference>
<dbReference type="GO" id="GO:0097183">
    <property type="term" value="C:protein C inhibitor-coagulation factor XI complex"/>
    <property type="evidence" value="ECO:0000250"/>
    <property type="project" value="UniProtKB"/>
</dbReference>
<dbReference type="GO" id="GO:0036029">
    <property type="term" value="C:protein C inhibitor-KLK3 complex"/>
    <property type="evidence" value="ECO:0000250"/>
    <property type="project" value="UniProtKB"/>
</dbReference>
<dbReference type="GO" id="GO:0036030">
    <property type="term" value="C:protein C inhibitor-plasma kallikrein complex"/>
    <property type="evidence" value="ECO:0000250"/>
    <property type="project" value="UniProtKB"/>
</dbReference>
<dbReference type="GO" id="GO:0036026">
    <property type="term" value="C:protein C inhibitor-PLAT complex"/>
    <property type="evidence" value="ECO:0000250"/>
    <property type="project" value="UniProtKB"/>
</dbReference>
<dbReference type="GO" id="GO:0036027">
    <property type="term" value="C:protein C inhibitor-PLAU complex"/>
    <property type="evidence" value="ECO:0000250"/>
    <property type="project" value="UniProtKB"/>
</dbReference>
<dbReference type="GO" id="GO:0036028">
    <property type="term" value="C:protein C inhibitor-thrombin complex"/>
    <property type="evidence" value="ECO:0000250"/>
    <property type="project" value="UniProtKB"/>
</dbReference>
<dbReference type="GO" id="GO:0036025">
    <property type="term" value="C:protein C inhibitor-TMPRSS11E complex"/>
    <property type="evidence" value="ECO:0000250"/>
    <property type="project" value="UniProtKB"/>
</dbReference>
<dbReference type="GO" id="GO:0036024">
    <property type="term" value="C:protein C inhibitor-TMPRSS7 complex"/>
    <property type="evidence" value="ECO:0000250"/>
    <property type="project" value="UniProtKB"/>
</dbReference>
<dbReference type="GO" id="GO:0032190">
    <property type="term" value="F:acrosin binding"/>
    <property type="evidence" value="ECO:0007669"/>
    <property type="project" value="Ensembl"/>
</dbReference>
<dbReference type="GO" id="GO:0031210">
    <property type="term" value="F:phosphatidylcholine binding"/>
    <property type="evidence" value="ECO:0000250"/>
    <property type="project" value="UniProtKB"/>
</dbReference>
<dbReference type="GO" id="GO:0002020">
    <property type="term" value="F:protease binding"/>
    <property type="evidence" value="ECO:0007669"/>
    <property type="project" value="Ensembl"/>
</dbReference>
<dbReference type="GO" id="GO:0001972">
    <property type="term" value="F:retinoic acid binding"/>
    <property type="evidence" value="ECO:0000250"/>
    <property type="project" value="UniProtKB"/>
</dbReference>
<dbReference type="GO" id="GO:0004867">
    <property type="term" value="F:serine-type endopeptidase inhibitor activity"/>
    <property type="evidence" value="ECO:0000250"/>
    <property type="project" value="UniProtKB"/>
</dbReference>
<dbReference type="GO" id="GO:0007283">
    <property type="term" value="P:spermatogenesis"/>
    <property type="evidence" value="ECO:0000315"/>
    <property type="project" value="UniProtKB"/>
</dbReference>
<dbReference type="CDD" id="cd19553">
    <property type="entry name" value="serpinA5_PCI"/>
    <property type="match status" value="1"/>
</dbReference>
<dbReference type="FunFam" id="3.30.497.10:FF:000001">
    <property type="entry name" value="Serine protease inhibitor"/>
    <property type="match status" value="1"/>
</dbReference>
<dbReference type="FunFam" id="2.30.39.10:FF:000002">
    <property type="entry name" value="Serpin family D member 1"/>
    <property type="match status" value="1"/>
</dbReference>
<dbReference type="Gene3D" id="2.30.39.10">
    <property type="entry name" value="Alpha-1-antitrypsin, domain 1"/>
    <property type="match status" value="1"/>
</dbReference>
<dbReference type="Gene3D" id="3.30.497.10">
    <property type="entry name" value="Antithrombin, subunit I, domain 2"/>
    <property type="match status" value="1"/>
</dbReference>
<dbReference type="InterPro" id="IPR023796">
    <property type="entry name" value="Serpin_dom"/>
</dbReference>
<dbReference type="InterPro" id="IPR000215">
    <property type="entry name" value="Serpin_fam"/>
</dbReference>
<dbReference type="InterPro" id="IPR036186">
    <property type="entry name" value="Serpin_sf"/>
</dbReference>
<dbReference type="InterPro" id="IPR042178">
    <property type="entry name" value="Serpin_sf_1"/>
</dbReference>
<dbReference type="InterPro" id="IPR042185">
    <property type="entry name" value="Serpin_sf_2"/>
</dbReference>
<dbReference type="PANTHER" id="PTHR11461:SF274">
    <property type="entry name" value="PLASMA SERINE PROTEASE INHIBITOR"/>
    <property type="match status" value="1"/>
</dbReference>
<dbReference type="PANTHER" id="PTHR11461">
    <property type="entry name" value="SERINE PROTEASE INHIBITOR, SERPIN"/>
    <property type="match status" value="1"/>
</dbReference>
<dbReference type="Pfam" id="PF00079">
    <property type="entry name" value="Serpin"/>
    <property type="match status" value="1"/>
</dbReference>
<dbReference type="SMART" id="SM00093">
    <property type="entry name" value="SERPIN"/>
    <property type="match status" value="1"/>
</dbReference>
<dbReference type="SUPFAM" id="SSF56574">
    <property type="entry name" value="Serpins"/>
    <property type="match status" value="1"/>
</dbReference>
<accession>P70458</accession>
<accession>Q5BKQ8</accession>
<accession>Q8BU50</accession>
<name>IPSP_MOUSE</name>
<comment type="function">
    <text evidence="1">Heparin-dependent serine protease inhibitor acting in body fluids and secretions. Inactivates serine proteases by binding irreversibly to their serine activation site. Involved in the regulation of intravascular and extravascular proteolytic activities. Plays hemostatic roles in the blood plasma. Acts as a procoagulant and pro-inflammatory factor by inhibiting the anticoagulant activated protein C factor as well as the generation of activated protein C factor by the thrombin/thrombomodulin complex. Acts as an anticoagulant factor by inhibiting blood coagulation factors like prothrombin, factor XI, factor Xa, plasma kallikrein and fibrinolytic enzymes such as tissue- and urinary-type plasminogen activators. In seminal plasma, inactivates several serine proteases implicated in the reproductive system. Inhibits the serpin acrosin; indirectly protects component of the male genital tract from being degraded by excessive released acrosin. Inhibits tissue- and urinary-type plasminogen activator, prostate-specific antigen and kallikrein activities; has a control on the sperm motility and fertilization. Inhibits the activated protein C-catalyzed degradation of SEMG1 and SEMG2; regulates the degradation of semenogelin during the process of transfer of spermatozoa from the male reproductive tract into the female tract. In urine, inhibits urinary-type plasminogen activator and kallikrein activities. Inactivates membrane-anchored serine proteases activities such as MPRSS7 and TMPRSS11E. Inhibits urinary-type plasminogen activator-dependent tumor cell invasion and metastasis. May also play a non-inhibitory role in seminal plasma and urine as a hydrophobic hormone carrier by its binding to retinoic acid (By similarity).</text>
</comment>
<comment type="activity regulation">
    <text>Its inhibitory activity is greatly enhanced in the presence of glycosaminoglycans, heparin, thrombomodulin and phospholipids vesicles.</text>
</comment>
<comment type="subunit">
    <text evidence="1">Forms protease inhibiting heterodimers in extracellular body fluids with serine proteases such as activated protein C/coagulation factor V/F5, acrosin/ACR, chymotrypsinogen B/CTRB1, prothrombin/F2, factor Xa/F10, factor XI/F11, kallikrein/KLKB1, tissue kallikrein, trypsin/PRSS1, prostate specific antigen/KLK3, tissue plasminogen activator/PLAT and urinary plasminogen activator/PLAU. Forms membrane-anchored serine proteases inhibiting heterodimers with TMPRSS7 and TMPRSS11E. Interacts with SEMG2 (By similarity).</text>
</comment>
<comment type="interaction">
    <interactant intactId="EBI-490966">
        <id>P70458</id>
    </interactant>
    <interactant intactId="EBI-490889">
        <id>Q5S248</id>
        <label>Tmprss11e</label>
    </interactant>
    <organismsDiffer>false</organismsDiffer>
    <experiments>2</experiments>
</comment>
<comment type="subcellular location">
    <subcellularLocation>
        <location evidence="1">Secreted</location>
        <location evidence="1">Extracellular space</location>
    </subcellularLocation>
    <text evidence="1">Localized on the plasma membrane overlying the acrosomal head of spermatozoa of ependymal spermatozoa and ejaculated sperm. Localized at the equatorial segment of acrosome-reacted spermatozoa. Localized in alpha granules in resting platelets and on the external plasma membrane and within the surface-connected cannalicular system in activated platelets (By similarity).</text>
</comment>
<comment type="tissue specificity">
    <text evidence="4">Not detected in blood plasma (at protein level). Expressed in testis, epididymis, seminal vesicles, prostate and ovaries.</text>
</comment>
<comment type="domain">
    <text evidence="1">The reactive center loop (RCL) extends out from the body of the protein and directs binding to the target protease. The protease cleaves the serpin at the reactive site within the RCL, establishing a covalent linkage between the carboxyl group of the serpin reactive site and the serine hydroxyl of the protease. The resulting inactive serpin-protease complex is highly stable (By similarity).</text>
</comment>
<comment type="PTM">
    <text evidence="1">N-glycosylated; glycans consist of a mixture of sialylated bi- (including sialyl-Lewis X epitopes), tri- and tetra-antennary complex-type chains; affects the maximal heparin- and thrombomodulin-enhanced rates of thrombin inhibition. O-glycosylated; further modified with 2 sialic acid residues. Proteolytically cleaved at the N-terminus; inhibits slightly the heparin- and thrombomodulin-enhanced rates of thrombin inhibition (By similarity).</text>
</comment>
<comment type="PTM">
    <text evidence="1">Proteolytically cleaved. Inhibition of proteases is accompanied by formation of a stable enzyme-inhibitor complex and by degradation of the serpin to lower molecular weight derivatives (By similarity).</text>
</comment>
<comment type="disruption phenotype">
    <text evidence="3">Mice are healthy but males are infertile; spermatozoa are morphologically abnormal, most lacked tails and malformed heads. The lumina of the seminiferous tubules are filled with cells in different stages of spermatogenesis and are sometimes necrotic. The cytoplasm of Sertoli cells contained vacuoles and appeared necrotic. The Sertoli cell barrier appeared disrupted.</text>
</comment>
<comment type="similarity">
    <text evidence="5">Belongs to the serpin family.</text>
</comment>
<comment type="caution">
    <text evidence="5">According to PubMed:11120760 it is not detectable in blood plasma.</text>
</comment>